<keyword id="KW-0004">4Fe-4S</keyword>
<keyword id="KW-0408">Iron</keyword>
<keyword id="KW-0411">Iron-sulfur</keyword>
<keyword id="KW-0479">Metal-binding</keyword>
<keyword id="KW-0496">Mitochondrion</keyword>
<keyword id="KW-1185">Reference proteome</keyword>
<keyword id="KW-0949">S-adenosyl-L-methionine</keyword>
<keyword id="KW-0808">Transferase</keyword>
<keyword id="KW-0809">Transit peptide</keyword>
<gene>
    <name evidence="1" type="primary">LIP1</name>
    <name type="ORF">OSTLU_32294</name>
</gene>
<accession>A4RZ86</accession>
<feature type="transit peptide" description="Mitochondrion" evidence="1">
    <location>
        <begin position="1"/>
        <end position="30"/>
    </location>
</feature>
<feature type="chain" id="PRO_0000398850" description="Lipoyl synthase, mitochondrial">
    <location>
        <begin position="31"/>
        <end position="399"/>
    </location>
</feature>
<feature type="domain" description="Radical SAM core" evidence="2">
    <location>
        <begin position="145"/>
        <end position="364"/>
    </location>
</feature>
<feature type="region of interest" description="Disordered" evidence="3">
    <location>
        <begin position="31"/>
        <end position="58"/>
    </location>
</feature>
<feature type="compositionally biased region" description="Basic and acidic residues" evidence="3">
    <location>
        <begin position="31"/>
        <end position="41"/>
    </location>
</feature>
<feature type="binding site" evidence="1">
    <location>
        <position position="131"/>
    </location>
    <ligand>
        <name>[4Fe-4S] cluster</name>
        <dbReference type="ChEBI" id="CHEBI:49883"/>
        <label>1</label>
    </ligand>
</feature>
<feature type="binding site" evidence="1">
    <location>
        <position position="136"/>
    </location>
    <ligand>
        <name>[4Fe-4S] cluster</name>
        <dbReference type="ChEBI" id="CHEBI:49883"/>
        <label>1</label>
    </ligand>
</feature>
<feature type="binding site" evidence="1">
    <location>
        <position position="142"/>
    </location>
    <ligand>
        <name>[4Fe-4S] cluster</name>
        <dbReference type="ChEBI" id="CHEBI:49883"/>
        <label>1</label>
    </ligand>
</feature>
<feature type="binding site" evidence="1">
    <location>
        <position position="162"/>
    </location>
    <ligand>
        <name>[4Fe-4S] cluster</name>
        <dbReference type="ChEBI" id="CHEBI:49883"/>
        <label>2</label>
        <note>4Fe-4S-S-AdoMet</note>
    </ligand>
</feature>
<feature type="binding site" evidence="1">
    <location>
        <position position="166"/>
    </location>
    <ligand>
        <name>[4Fe-4S] cluster</name>
        <dbReference type="ChEBI" id="CHEBI:49883"/>
        <label>2</label>
        <note>4Fe-4S-S-AdoMet</note>
    </ligand>
</feature>
<feature type="binding site" evidence="1">
    <location>
        <position position="169"/>
    </location>
    <ligand>
        <name>[4Fe-4S] cluster</name>
        <dbReference type="ChEBI" id="CHEBI:49883"/>
        <label>2</label>
        <note>4Fe-4S-S-AdoMet</note>
    </ligand>
</feature>
<feature type="binding site" evidence="1">
    <location>
        <position position="375"/>
    </location>
    <ligand>
        <name>[4Fe-4S] cluster</name>
        <dbReference type="ChEBI" id="CHEBI:49883"/>
        <label>1</label>
    </ligand>
</feature>
<sequence>MRAVLELTRRRARNARFARARAVVGARARAADAQELRDDSKGGSSVDKATSTAAEARETAHTLEGFREALRHGPGFDDFVRGDVAYSVPAPKSLKDKTTRKPAWLKREVPGGERYTEIKSKLRELKLATVCEEAKCPNLGECWGGGDGKTATATIMIMGDTCTRGCRFCAVKTAKAPPPLDKDEPANVSKAIAAWGLDYVVLTSVDRDDIEDQGAGHFRETVQRLKASCDVLVEALTPDFRGEKHLVELVATSGLDVFAHNVETVPELQRDVRDRRANWDQSIEVLKHAKKSGAKITKTSIMLGLGETHEQVVNALKLLREADVDVVTFGQYMRPTKKHLAVVEYVTPEAFKRYQEIAEEMGFLYVASGAMVRSSYKAGEFFLANVIKQRKAKEAAAAN</sequence>
<evidence type="ECO:0000255" key="1">
    <source>
        <dbReference type="HAMAP-Rule" id="MF_03128"/>
    </source>
</evidence>
<evidence type="ECO:0000255" key="2">
    <source>
        <dbReference type="PROSITE-ProRule" id="PRU01266"/>
    </source>
</evidence>
<evidence type="ECO:0000256" key="3">
    <source>
        <dbReference type="SAM" id="MobiDB-lite"/>
    </source>
</evidence>
<dbReference type="EC" id="2.8.1.8" evidence="1"/>
<dbReference type="EMBL" id="CP000586">
    <property type="protein sequence ID" value="ABO96579.1"/>
    <property type="molecule type" value="Genomic_DNA"/>
</dbReference>
<dbReference type="RefSeq" id="XP_001418286.1">
    <property type="nucleotide sequence ID" value="XM_001418249.1"/>
</dbReference>
<dbReference type="SMR" id="A4RZ86"/>
<dbReference type="STRING" id="436017.A4RZ86"/>
<dbReference type="EnsemblPlants" id="ABO96579">
    <property type="protein sequence ID" value="ABO96579"/>
    <property type="gene ID" value="OSTLU_32294"/>
</dbReference>
<dbReference type="GeneID" id="5002530"/>
<dbReference type="Gramene" id="ABO96579">
    <property type="protein sequence ID" value="ABO96579"/>
    <property type="gene ID" value="OSTLU_32294"/>
</dbReference>
<dbReference type="KEGG" id="olu:OSTLU_32294"/>
<dbReference type="eggNOG" id="KOG2672">
    <property type="taxonomic scope" value="Eukaryota"/>
</dbReference>
<dbReference type="HOGENOM" id="CLU_033144_1_1_1"/>
<dbReference type="OMA" id="PYCDIDF"/>
<dbReference type="OrthoDB" id="3231at2759"/>
<dbReference type="UniPathway" id="UPA00538">
    <property type="reaction ID" value="UER00593"/>
</dbReference>
<dbReference type="Proteomes" id="UP000001568">
    <property type="component" value="Chromosome 6"/>
</dbReference>
<dbReference type="GO" id="GO:0005759">
    <property type="term" value="C:mitochondrial matrix"/>
    <property type="evidence" value="ECO:0007669"/>
    <property type="project" value="EnsemblPlants"/>
</dbReference>
<dbReference type="GO" id="GO:0051539">
    <property type="term" value="F:4 iron, 4 sulfur cluster binding"/>
    <property type="evidence" value="ECO:0007669"/>
    <property type="project" value="UniProtKB-UniRule"/>
</dbReference>
<dbReference type="GO" id="GO:0016992">
    <property type="term" value="F:lipoate synthase activity"/>
    <property type="evidence" value="ECO:0007669"/>
    <property type="project" value="UniProtKB-UniRule"/>
</dbReference>
<dbReference type="GO" id="GO:0046872">
    <property type="term" value="F:metal ion binding"/>
    <property type="evidence" value="ECO:0007669"/>
    <property type="project" value="UniProtKB-KW"/>
</dbReference>
<dbReference type="CDD" id="cd01335">
    <property type="entry name" value="Radical_SAM"/>
    <property type="match status" value="1"/>
</dbReference>
<dbReference type="Gene3D" id="3.20.20.70">
    <property type="entry name" value="Aldolase class I"/>
    <property type="match status" value="1"/>
</dbReference>
<dbReference type="HAMAP" id="MF_00206">
    <property type="entry name" value="Lipoyl_synth"/>
    <property type="match status" value="1"/>
</dbReference>
<dbReference type="HAMAP" id="MF_03128">
    <property type="entry name" value="Lipoyl_synth_plantM"/>
    <property type="match status" value="1"/>
</dbReference>
<dbReference type="InterPro" id="IPR013785">
    <property type="entry name" value="Aldolase_TIM"/>
</dbReference>
<dbReference type="InterPro" id="IPR006638">
    <property type="entry name" value="Elp3/MiaA/NifB-like_rSAM"/>
</dbReference>
<dbReference type="InterPro" id="IPR031691">
    <property type="entry name" value="LIAS_N"/>
</dbReference>
<dbReference type="InterPro" id="IPR003698">
    <property type="entry name" value="Lipoyl_synth"/>
</dbReference>
<dbReference type="InterPro" id="IPR027527">
    <property type="entry name" value="Lipoyl_synth_mt"/>
</dbReference>
<dbReference type="InterPro" id="IPR007197">
    <property type="entry name" value="rSAM"/>
</dbReference>
<dbReference type="NCBIfam" id="TIGR00510">
    <property type="entry name" value="lipA"/>
    <property type="match status" value="1"/>
</dbReference>
<dbReference type="NCBIfam" id="NF004019">
    <property type="entry name" value="PRK05481.1"/>
    <property type="match status" value="1"/>
</dbReference>
<dbReference type="NCBIfam" id="NF009544">
    <property type="entry name" value="PRK12928.1"/>
    <property type="match status" value="1"/>
</dbReference>
<dbReference type="PANTHER" id="PTHR10949">
    <property type="entry name" value="LIPOYL SYNTHASE"/>
    <property type="match status" value="1"/>
</dbReference>
<dbReference type="PANTHER" id="PTHR10949:SF0">
    <property type="entry name" value="LIPOYL SYNTHASE, MITOCHONDRIAL"/>
    <property type="match status" value="1"/>
</dbReference>
<dbReference type="Pfam" id="PF16881">
    <property type="entry name" value="LIAS_N"/>
    <property type="match status" value="1"/>
</dbReference>
<dbReference type="Pfam" id="PF04055">
    <property type="entry name" value="Radical_SAM"/>
    <property type="match status" value="1"/>
</dbReference>
<dbReference type="SFLD" id="SFLDF00271">
    <property type="entry name" value="lipoyl_synthase"/>
    <property type="match status" value="1"/>
</dbReference>
<dbReference type="SFLD" id="SFLDS00029">
    <property type="entry name" value="Radical_SAM"/>
    <property type="match status" value="1"/>
</dbReference>
<dbReference type="SMART" id="SM00729">
    <property type="entry name" value="Elp3"/>
    <property type="match status" value="1"/>
</dbReference>
<dbReference type="SUPFAM" id="SSF102114">
    <property type="entry name" value="Radical SAM enzymes"/>
    <property type="match status" value="1"/>
</dbReference>
<dbReference type="PROSITE" id="PS51918">
    <property type="entry name" value="RADICAL_SAM"/>
    <property type="match status" value="1"/>
</dbReference>
<name>LIAS_OSTLU</name>
<protein>
    <recommendedName>
        <fullName evidence="1">Lipoyl synthase, mitochondrial</fullName>
        <ecNumber evidence="1">2.8.1.8</ecNumber>
    </recommendedName>
    <alternativeName>
        <fullName evidence="1">Lipoate synthase</fullName>
        <shortName evidence="1">LS</shortName>
        <shortName evidence="1">Lip-syn</shortName>
    </alternativeName>
    <alternativeName>
        <fullName evidence="1">Lipoic acid synthase</fullName>
    </alternativeName>
</protein>
<reference key="1">
    <citation type="journal article" date="2007" name="Proc. Natl. Acad. Sci. U.S.A.">
        <title>The tiny eukaryote Ostreococcus provides genomic insights into the paradox of plankton speciation.</title>
        <authorList>
            <person name="Palenik B."/>
            <person name="Grimwood J."/>
            <person name="Aerts A."/>
            <person name="Rouze P."/>
            <person name="Salamov A."/>
            <person name="Putnam N."/>
            <person name="Dupont C."/>
            <person name="Jorgensen R."/>
            <person name="Derelle E."/>
            <person name="Rombauts S."/>
            <person name="Zhou K."/>
            <person name="Otillar R."/>
            <person name="Merchant S.S."/>
            <person name="Podell S."/>
            <person name="Gaasterland T."/>
            <person name="Napoli C."/>
            <person name="Gendler K."/>
            <person name="Manuell A."/>
            <person name="Tai V."/>
            <person name="Vallon O."/>
            <person name="Piganeau G."/>
            <person name="Jancek S."/>
            <person name="Heijde M."/>
            <person name="Jabbari K."/>
            <person name="Bowler C."/>
            <person name="Lohr M."/>
            <person name="Robbens S."/>
            <person name="Werner G."/>
            <person name="Dubchak I."/>
            <person name="Pazour G.J."/>
            <person name="Ren Q."/>
            <person name="Paulsen I."/>
            <person name="Delwiche C."/>
            <person name="Schmutz J."/>
            <person name="Rokhsar D."/>
            <person name="Van de Peer Y."/>
            <person name="Moreau H."/>
            <person name="Grigoriev I.V."/>
        </authorList>
    </citation>
    <scope>NUCLEOTIDE SEQUENCE [LARGE SCALE GENOMIC DNA]</scope>
    <source>
        <strain>CCE9901</strain>
    </source>
</reference>
<organism>
    <name type="scientific">Ostreococcus lucimarinus (strain CCE9901)</name>
    <dbReference type="NCBI Taxonomy" id="436017"/>
    <lineage>
        <taxon>Eukaryota</taxon>
        <taxon>Viridiplantae</taxon>
        <taxon>Chlorophyta</taxon>
        <taxon>Mamiellophyceae</taxon>
        <taxon>Mamiellales</taxon>
        <taxon>Bathycoccaceae</taxon>
        <taxon>Ostreococcus</taxon>
    </lineage>
</organism>
<proteinExistence type="inferred from homology"/>
<comment type="function">
    <text evidence="1">Catalyzes the radical-mediated insertion of two sulfur atoms into the C-6 and C-8 positions of the octanoyl moiety bound to the lipoyl domains of lipoate-dependent enzymes, thereby converting the octanoylated domains into lipoylated derivatives.</text>
</comment>
<comment type="catalytic activity">
    <reaction evidence="1">
        <text>[[Fe-S] cluster scaffold protein carrying a second [4Fe-4S](2+) cluster] + N(6)-octanoyl-L-lysyl-[protein] + 2 oxidized [2Fe-2S]-[ferredoxin] + 2 S-adenosyl-L-methionine + 4 H(+) = [[Fe-S] cluster scaffold protein] + N(6)-[(R)-dihydrolipoyl]-L-lysyl-[protein] + 4 Fe(3+) + 2 hydrogen sulfide + 2 5'-deoxyadenosine + 2 L-methionine + 2 reduced [2Fe-2S]-[ferredoxin]</text>
        <dbReference type="Rhea" id="RHEA:16585"/>
        <dbReference type="Rhea" id="RHEA-COMP:9928"/>
        <dbReference type="Rhea" id="RHEA-COMP:10000"/>
        <dbReference type="Rhea" id="RHEA-COMP:10001"/>
        <dbReference type="Rhea" id="RHEA-COMP:10475"/>
        <dbReference type="Rhea" id="RHEA-COMP:14568"/>
        <dbReference type="Rhea" id="RHEA-COMP:14569"/>
        <dbReference type="ChEBI" id="CHEBI:15378"/>
        <dbReference type="ChEBI" id="CHEBI:17319"/>
        <dbReference type="ChEBI" id="CHEBI:29034"/>
        <dbReference type="ChEBI" id="CHEBI:29919"/>
        <dbReference type="ChEBI" id="CHEBI:33722"/>
        <dbReference type="ChEBI" id="CHEBI:33737"/>
        <dbReference type="ChEBI" id="CHEBI:33738"/>
        <dbReference type="ChEBI" id="CHEBI:57844"/>
        <dbReference type="ChEBI" id="CHEBI:59789"/>
        <dbReference type="ChEBI" id="CHEBI:78809"/>
        <dbReference type="ChEBI" id="CHEBI:83100"/>
        <dbReference type="EC" id="2.8.1.8"/>
    </reaction>
</comment>
<comment type="cofactor">
    <cofactor evidence="1">
        <name>[4Fe-4S] cluster</name>
        <dbReference type="ChEBI" id="CHEBI:49883"/>
    </cofactor>
    <text evidence="1">Binds 2 [4Fe-4S] clusters per subunit. One cluster is coordinated with 3 cysteines and an exchangeable S-adenosyl-L-methionine.</text>
</comment>
<comment type="pathway">
    <text evidence="1">Protein modification; protein lipoylation via endogenous pathway; protein N(6)-(lipoyl)lysine from octanoyl-[acyl-carrier-protein]: step 2/2.</text>
</comment>
<comment type="subcellular location">
    <subcellularLocation>
        <location evidence="1">Mitochondrion</location>
    </subcellularLocation>
</comment>
<comment type="similarity">
    <text evidence="1">Belongs to the radical SAM superfamily. Lipoyl synthase family.</text>
</comment>